<feature type="chain" id="PRO_1000099942" description="Pantothenate kinase">
    <location>
        <begin position="1"/>
        <end position="318"/>
    </location>
</feature>
<feature type="binding site" evidence="1">
    <location>
        <begin position="96"/>
        <end position="103"/>
    </location>
    <ligand>
        <name>ATP</name>
        <dbReference type="ChEBI" id="CHEBI:30616"/>
    </ligand>
</feature>
<organism>
    <name type="scientific">Rhodopseudomonas palustris (strain TIE-1)</name>
    <dbReference type="NCBI Taxonomy" id="395960"/>
    <lineage>
        <taxon>Bacteria</taxon>
        <taxon>Pseudomonadati</taxon>
        <taxon>Pseudomonadota</taxon>
        <taxon>Alphaproteobacteria</taxon>
        <taxon>Hyphomicrobiales</taxon>
        <taxon>Nitrobacteraceae</taxon>
        <taxon>Rhodopseudomonas</taxon>
    </lineage>
</organism>
<name>COAA_RHOPT</name>
<proteinExistence type="inferred from homology"/>
<accession>B3Q953</accession>
<dbReference type="EC" id="2.7.1.33" evidence="1"/>
<dbReference type="EMBL" id="CP001096">
    <property type="protein sequence ID" value="ACE98877.1"/>
    <property type="molecule type" value="Genomic_DNA"/>
</dbReference>
<dbReference type="RefSeq" id="WP_011155883.1">
    <property type="nucleotide sequence ID" value="NC_011004.1"/>
</dbReference>
<dbReference type="SMR" id="B3Q953"/>
<dbReference type="GeneID" id="66891325"/>
<dbReference type="KEGG" id="rpt:Rpal_0317"/>
<dbReference type="HOGENOM" id="CLU_053818_1_1_5"/>
<dbReference type="OrthoDB" id="1550976at2"/>
<dbReference type="UniPathway" id="UPA00241">
    <property type="reaction ID" value="UER00352"/>
</dbReference>
<dbReference type="Proteomes" id="UP000001725">
    <property type="component" value="Chromosome"/>
</dbReference>
<dbReference type="GO" id="GO:0005737">
    <property type="term" value="C:cytoplasm"/>
    <property type="evidence" value="ECO:0007669"/>
    <property type="project" value="UniProtKB-SubCell"/>
</dbReference>
<dbReference type="GO" id="GO:0005524">
    <property type="term" value="F:ATP binding"/>
    <property type="evidence" value="ECO:0007669"/>
    <property type="project" value="UniProtKB-UniRule"/>
</dbReference>
<dbReference type="GO" id="GO:0004594">
    <property type="term" value="F:pantothenate kinase activity"/>
    <property type="evidence" value="ECO:0007669"/>
    <property type="project" value="UniProtKB-UniRule"/>
</dbReference>
<dbReference type="GO" id="GO:0015937">
    <property type="term" value="P:coenzyme A biosynthetic process"/>
    <property type="evidence" value="ECO:0007669"/>
    <property type="project" value="UniProtKB-UniRule"/>
</dbReference>
<dbReference type="CDD" id="cd02025">
    <property type="entry name" value="PanK"/>
    <property type="match status" value="1"/>
</dbReference>
<dbReference type="Gene3D" id="3.40.50.300">
    <property type="entry name" value="P-loop containing nucleotide triphosphate hydrolases"/>
    <property type="match status" value="1"/>
</dbReference>
<dbReference type="HAMAP" id="MF_00215">
    <property type="entry name" value="Pantothen_kinase_1"/>
    <property type="match status" value="1"/>
</dbReference>
<dbReference type="InterPro" id="IPR027417">
    <property type="entry name" value="P-loop_NTPase"/>
</dbReference>
<dbReference type="InterPro" id="IPR004566">
    <property type="entry name" value="PanK"/>
</dbReference>
<dbReference type="InterPro" id="IPR006083">
    <property type="entry name" value="PRK/URK"/>
</dbReference>
<dbReference type="NCBIfam" id="TIGR00554">
    <property type="entry name" value="panK_bact"/>
    <property type="match status" value="1"/>
</dbReference>
<dbReference type="PANTHER" id="PTHR10285">
    <property type="entry name" value="URIDINE KINASE"/>
    <property type="match status" value="1"/>
</dbReference>
<dbReference type="Pfam" id="PF00485">
    <property type="entry name" value="PRK"/>
    <property type="match status" value="1"/>
</dbReference>
<dbReference type="PIRSF" id="PIRSF000545">
    <property type="entry name" value="Pantothenate_kin"/>
    <property type="match status" value="1"/>
</dbReference>
<dbReference type="SUPFAM" id="SSF52540">
    <property type="entry name" value="P-loop containing nucleoside triphosphate hydrolases"/>
    <property type="match status" value="1"/>
</dbReference>
<comment type="catalytic activity">
    <reaction evidence="1">
        <text>(R)-pantothenate + ATP = (R)-4'-phosphopantothenate + ADP + H(+)</text>
        <dbReference type="Rhea" id="RHEA:16373"/>
        <dbReference type="ChEBI" id="CHEBI:10986"/>
        <dbReference type="ChEBI" id="CHEBI:15378"/>
        <dbReference type="ChEBI" id="CHEBI:29032"/>
        <dbReference type="ChEBI" id="CHEBI:30616"/>
        <dbReference type="ChEBI" id="CHEBI:456216"/>
        <dbReference type="EC" id="2.7.1.33"/>
    </reaction>
</comment>
<comment type="pathway">
    <text evidence="1">Cofactor biosynthesis; coenzyme A biosynthesis; CoA from (R)-pantothenate: step 1/5.</text>
</comment>
<comment type="subcellular location">
    <subcellularLocation>
        <location evidence="1">Cytoplasm</location>
    </subcellularLocation>
</comment>
<comment type="similarity">
    <text evidence="1">Belongs to the prokaryotic pantothenate kinase family.</text>
</comment>
<protein>
    <recommendedName>
        <fullName evidence="1">Pantothenate kinase</fullName>
        <ecNumber evidence="1">2.7.1.33</ecNumber>
    </recommendedName>
    <alternativeName>
        <fullName evidence="1">Pantothenic acid kinase</fullName>
    </alternativeName>
</protein>
<gene>
    <name evidence="1" type="primary">coaA</name>
    <name type="ordered locus">Rpal_0317</name>
</gene>
<evidence type="ECO:0000255" key="1">
    <source>
        <dbReference type="HAMAP-Rule" id="MF_00215"/>
    </source>
</evidence>
<reference key="1">
    <citation type="submission" date="2008-05" db="EMBL/GenBank/DDBJ databases">
        <title>Complete sequence of Rhodopseudomonas palustris TIE-1.</title>
        <authorList>
            <consortium name="US DOE Joint Genome Institute"/>
            <person name="Lucas S."/>
            <person name="Copeland A."/>
            <person name="Lapidus A."/>
            <person name="Glavina del Rio T."/>
            <person name="Dalin E."/>
            <person name="Tice H."/>
            <person name="Pitluck S."/>
            <person name="Chain P."/>
            <person name="Malfatti S."/>
            <person name="Shin M."/>
            <person name="Vergez L."/>
            <person name="Lang D."/>
            <person name="Schmutz J."/>
            <person name="Larimer F."/>
            <person name="Land M."/>
            <person name="Hauser L."/>
            <person name="Kyrpides N."/>
            <person name="Mikhailova N."/>
            <person name="Emerson D."/>
            <person name="Newman D.K."/>
            <person name="Roden E."/>
            <person name="Richardson P."/>
        </authorList>
    </citation>
    <scope>NUCLEOTIDE SEQUENCE [LARGE SCALE GENOMIC DNA]</scope>
    <source>
        <strain>TIE-1</strain>
    </source>
</reference>
<keyword id="KW-0067">ATP-binding</keyword>
<keyword id="KW-0173">Coenzyme A biosynthesis</keyword>
<keyword id="KW-0963">Cytoplasm</keyword>
<keyword id="KW-0418">Kinase</keyword>
<keyword id="KW-0547">Nucleotide-binding</keyword>
<keyword id="KW-0808">Transferase</keyword>
<sequence length="318" mass="36078">MDARSDLHHYNPYRVFSRAEWASMREDTPMTLDAAEVAALRSMHDRLDLSEVEEIYLPMSRLLSIHVAAMQQLYYAQRRFLGVVERKMPFIIGVAGSVAVGKSTTARVLQALLARWSPRPTVDLVTTDGFLHPNAVLERAGLMQKKGFPESYDLPALLGFLSDIKSGRRKVKAPIYSHLTYDIVPNKFTVIDRPDILIVEGVNVLQTGRLPRDGKAVPVVSDFFDFSVYLDADEPVLRDWYVRRFLALRDTAFHDPRSYFHRYAVLSDEEATATAIAIWERTNLANLEDNILPTRPRATLILKKGADHVVDSVALRRL</sequence>